<evidence type="ECO:0000250" key="1"/>
<evidence type="ECO:0000255" key="2">
    <source>
        <dbReference type="HAMAP-Rule" id="MF_00047"/>
    </source>
</evidence>
<protein>
    <recommendedName>
        <fullName evidence="2">D-alanine--D-alanine ligase</fullName>
        <ecNumber evidence="2">6.3.2.4</ecNumber>
    </recommendedName>
    <alternativeName>
        <fullName evidence="2">D-Ala-D-Ala ligase</fullName>
    </alternativeName>
    <alternativeName>
        <fullName evidence="2">D-alanylalanine synthetase</fullName>
    </alternativeName>
</protein>
<sequence length="357" mass="39020">MKIVVLAGGRSTERNVSISSGYRITNALRQKGQQATFIDLFLGYDLEGKTVEQVFDDANTSKDLNISDAILTDEDINKLRPDGSTQLFGPNVMAICKAADIVFLALHGGDGENGKVQAVFDINGVKYTGSGPLASGITMNKVFSKEVMLYHGIQTSGFKEFKRDQGPKQTVPFDFPVVVKPTSGGSSVGTHIIHNQEELESGLEDVFRFDNSAIVEEFTPGREFSLGVVNGHAYSAIEIKVRSGWYDFKHKFQAGYTDFITPPKDLDEDVHQAMKDVAVQTMDVLGLQNYGRIDFFANEKGVWVIEANNLPGMTPLSLLPQEAEADGVDYGDLVMDIVNGKLKLYADGMTEAGLLTK</sequence>
<organism>
    <name type="scientific">Lacticaseibacillus casei (strain BL23)</name>
    <name type="common">Lactobacillus casei</name>
    <dbReference type="NCBI Taxonomy" id="543734"/>
    <lineage>
        <taxon>Bacteria</taxon>
        <taxon>Bacillati</taxon>
        <taxon>Bacillota</taxon>
        <taxon>Bacilli</taxon>
        <taxon>Lactobacillales</taxon>
        <taxon>Lactobacillaceae</taxon>
        <taxon>Lacticaseibacillus</taxon>
    </lineage>
</organism>
<proteinExistence type="inferred from homology"/>
<dbReference type="EC" id="6.3.2.4" evidence="2"/>
<dbReference type="EMBL" id="FM177140">
    <property type="protein sequence ID" value="CAQ65267.1"/>
    <property type="molecule type" value="Genomic_DNA"/>
</dbReference>
<dbReference type="SMR" id="B3W7C1"/>
<dbReference type="KEGG" id="lcb:LCABL_01350"/>
<dbReference type="HOGENOM" id="CLU_039268_1_1_9"/>
<dbReference type="UniPathway" id="UPA00219"/>
<dbReference type="GO" id="GO:0005737">
    <property type="term" value="C:cytoplasm"/>
    <property type="evidence" value="ECO:0007669"/>
    <property type="project" value="UniProtKB-SubCell"/>
</dbReference>
<dbReference type="GO" id="GO:0005524">
    <property type="term" value="F:ATP binding"/>
    <property type="evidence" value="ECO:0007669"/>
    <property type="project" value="UniProtKB-KW"/>
</dbReference>
<dbReference type="GO" id="GO:0008716">
    <property type="term" value="F:D-alanine-D-alanine ligase activity"/>
    <property type="evidence" value="ECO:0007669"/>
    <property type="project" value="UniProtKB-UniRule"/>
</dbReference>
<dbReference type="GO" id="GO:0046872">
    <property type="term" value="F:metal ion binding"/>
    <property type="evidence" value="ECO:0007669"/>
    <property type="project" value="UniProtKB-KW"/>
</dbReference>
<dbReference type="GO" id="GO:0071555">
    <property type="term" value="P:cell wall organization"/>
    <property type="evidence" value="ECO:0007669"/>
    <property type="project" value="UniProtKB-KW"/>
</dbReference>
<dbReference type="GO" id="GO:0009252">
    <property type="term" value="P:peptidoglycan biosynthetic process"/>
    <property type="evidence" value="ECO:0007669"/>
    <property type="project" value="UniProtKB-UniRule"/>
</dbReference>
<dbReference type="GO" id="GO:0008360">
    <property type="term" value="P:regulation of cell shape"/>
    <property type="evidence" value="ECO:0007669"/>
    <property type="project" value="UniProtKB-KW"/>
</dbReference>
<dbReference type="Gene3D" id="3.40.50.20">
    <property type="match status" value="1"/>
</dbReference>
<dbReference type="Gene3D" id="3.30.1490.20">
    <property type="entry name" value="ATP-grasp fold, A domain"/>
    <property type="match status" value="1"/>
</dbReference>
<dbReference type="Gene3D" id="3.30.470.20">
    <property type="entry name" value="ATP-grasp fold, B domain"/>
    <property type="match status" value="1"/>
</dbReference>
<dbReference type="HAMAP" id="MF_00047">
    <property type="entry name" value="Dala_Dala_lig"/>
    <property type="match status" value="1"/>
</dbReference>
<dbReference type="InterPro" id="IPR011761">
    <property type="entry name" value="ATP-grasp"/>
</dbReference>
<dbReference type="InterPro" id="IPR013815">
    <property type="entry name" value="ATP_grasp_subdomain_1"/>
</dbReference>
<dbReference type="InterPro" id="IPR000291">
    <property type="entry name" value="D-Ala_lig_Van_CS"/>
</dbReference>
<dbReference type="InterPro" id="IPR005905">
    <property type="entry name" value="D_ala_D_ala"/>
</dbReference>
<dbReference type="InterPro" id="IPR011095">
    <property type="entry name" value="Dala_Dala_lig_C"/>
</dbReference>
<dbReference type="InterPro" id="IPR011127">
    <property type="entry name" value="Dala_Dala_lig_N"/>
</dbReference>
<dbReference type="InterPro" id="IPR016185">
    <property type="entry name" value="PreATP-grasp_dom_sf"/>
</dbReference>
<dbReference type="NCBIfam" id="TIGR01205">
    <property type="entry name" value="D_ala_D_alaTIGR"/>
    <property type="match status" value="1"/>
</dbReference>
<dbReference type="PANTHER" id="PTHR23132">
    <property type="entry name" value="D-ALANINE--D-ALANINE LIGASE"/>
    <property type="match status" value="1"/>
</dbReference>
<dbReference type="PANTHER" id="PTHR23132:SF23">
    <property type="entry name" value="D-ALANINE--D-ALANINE LIGASE B"/>
    <property type="match status" value="1"/>
</dbReference>
<dbReference type="Pfam" id="PF07478">
    <property type="entry name" value="Dala_Dala_lig_C"/>
    <property type="match status" value="1"/>
</dbReference>
<dbReference type="Pfam" id="PF01820">
    <property type="entry name" value="Dala_Dala_lig_N"/>
    <property type="match status" value="1"/>
</dbReference>
<dbReference type="PIRSF" id="PIRSF039102">
    <property type="entry name" value="Ddl/VanB"/>
    <property type="match status" value="1"/>
</dbReference>
<dbReference type="SMART" id="SM01209">
    <property type="entry name" value="GARS_A"/>
    <property type="match status" value="1"/>
</dbReference>
<dbReference type="SUPFAM" id="SSF56059">
    <property type="entry name" value="Glutathione synthetase ATP-binding domain-like"/>
    <property type="match status" value="1"/>
</dbReference>
<dbReference type="SUPFAM" id="SSF52440">
    <property type="entry name" value="PreATP-grasp domain"/>
    <property type="match status" value="1"/>
</dbReference>
<dbReference type="PROSITE" id="PS50975">
    <property type="entry name" value="ATP_GRASP"/>
    <property type="match status" value="1"/>
</dbReference>
<dbReference type="PROSITE" id="PS00843">
    <property type="entry name" value="DALA_DALA_LIGASE_1"/>
    <property type="match status" value="1"/>
</dbReference>
<accession>B3W7C1</accession>
<keyword id="KW-0067">ATP-binding</keyword>
<keyword id="KW-0133">Cell shape</keyword>
<keyword id="KW-0961">Cell wall biogenesis/degradation</keyword>
<keyword id="KW-0963">Cytoplasm</keyword>
<keyword id="KW-0436">Ligase</keyword>
<keyword id="KW-0460">Magnesium</keyword>
<keyword id="KW-0464">Manganese</keyword>
<keyword id="KW-0479">Metal-binding</keyword>
<keyword id="KW-0547">Nucleotide-binding</keyword>
<keyword id="KW-0573">Peptidoglycan synthesis</keyword>
<feature type="chain" id="PRO_1000091189" description="D-alanine--D-alanine ligase">
    <location>
        <begin position="1"/>
        <end position="357"/>
    </location>
</feature>
<feature type="domain" description="ATP-grasp" evidence="2">
    <location>
        <begin position="145"/>
        <end position="339"/>
    </location>
</feature>
<feature type="binding site" evidence="2">
    <location>
        <begin position="172"/>
        <end position="225"/>
    </location>
    <ligand>
        <name>ATP</name>
        <dbReference type="ChEBI" id="CHEBI:30616"/>
    </ligand>
</feature>
<feature type="binding site" evidence="2">
    <location>
        <position position="294"/>
    </location>
    <ligand>
        <name>Mg(2+)</name>
        <dbReference type="ChEBI" id="CHEBI:18420"/>
        <label>1</label>
    </ligand>
</feature>
<feature type="binding site" evidence="2">
    <location>
        <position position="306"/>
    </location>
    <ligand>
        <name>Mg(2+)</name>
        <dbReference type="ChEBI" id="CHEBI:18420"/>
        <label>1</label>
    </ligand>
</feature>
<feature type="binding site" evidence="2">
    <location>
        <position position="306"/>
    </location>
    <ligand>
        <name>Mg(2+)</name>
        <dbReference type="ChEBI" id="CHEBI:18420"/>
        <label>2</label>
    </ligand>
</feature>
<feature type="binding site" evidence="2">
    <location>
        <position position="308"/>
    </location>
    <ligand>
        <name>Mg(2+)</name>
        <dbReference type="ChEBI" id="CHEBI:18420"/>
        <label>2</label>
    </ligand>
</feature>
<gene>
    <name evidence="2" type="primary">ddl</name>
    <name type="ordered locus">LCABL_01350</name>
</gene>
<name>DDL_LACCB</name>
<reference key="1">
    <citation type="submission" date="2008-06" db="EMBL/GenBank/DDBJ databases">
        <title>Lactobacillus casei BL23 complete genome sequence.</title>
        <authorList>
            <person name="Maze A."/>
            <person name="Boel G."/>
            <person name="Bourand A."/>
            <person name="Loux V."/>
            <person name="Gibrat J.F."/>
            <person name="Zuniga M."/>
            <person name="Hartke A."/>
            <person name="Deutscher J."/>
        </authorList>
    </citation>
    <scope>NUCLEOTIDE SEQUENCE [LARGE SCALE GENOMIC DNA]</scope>
    <source>
        <strain>BL23</strain>
    </source>
</reference>
<comment type="function">
    <text evidence="2">Cell wall formation.</text>
</comment>
<comment type="catalytic activity">
    <reaction evidence="2">
        <text>2 D-alanine + ATP = D-alanyl-D-alanine + ADP + phosphate + H(+)</text>
        <dbReference type="Rhea" id="RHEA:11224"/>
        <dbReference type="ChEBI" id="CHEBI:15378"/>
        <dbReference type="ChEBI" id="CHEBI:30616"/>
        <dbReference type="ChEBI" id="CHEBI:43474"/>
        <dbReference type="ChEBI" id="CHEBI:57416"/>
        <dbReference type="ChEBI" id="CHEBI:57822"/>
        <dbReference type="ChEBI" id="CHEBI:456216"/>
        <dbReference type="EC" id="6.3.2.4"/>
    </reaction>
</comment>
<comment type="cofactor">
    <cofactor evidence="1">
        <name>Mg(2+)</name>
        <dbReference type="ChEBI" id="CHEBI:18420"/>
    </cofactor>
    <cofactor evidence="1">
        <name>Mn(2+)</name>
        <dbReference type="ChEBI" id="CHEBI:29035"/>
    </cofactor>
    <text evidence="1">Binds 2 magnesium or manganese ions per subunit.</text>
</comment>
<comment type="pathway">
    <text evidence="2">Cell wall biogenesis; peptidoglycan biosynthesis.</text>
</comment>
<comment type="subcellular location">
    <subcellularLocation>
        <location evidence="2">Cytoplasm</location>
    </subcellularLocation>
</comment>
<comment type="similarity">
    <text evidence="2">Belongs to the D-alanine--D-alanine ligase family.</text>
</comment>